<comment type="function">
    <text evidence="1">Catalyzes the conversion of dihydroorotate to orotate with fumarate as the electron acceptor.</text>
</comment>
<comment type="catalytic activity">
    <reaction>
        <text>(S)-dihydroorotate + fumarate = orotate + succinate</text>
        <dbReference type="Rhea" id="RHEA:30059"/>
        <dbReference type="ChEBI" id="CHEBI:29806"/>
        <dbReference type="ChEBI" id="CHEBI:30031"/>
        <dbReference type="ChEBI" id="CHEBI:30839"/>
        <dbReference type="ChEBI" id="CHEBI:30864"/>
        <dbReference type="EC" id="1.3.98.1"/>
    </reaction>
</comment>
<comment type="cofactor">
    <cofactor evidence="1">
        <name>FMN</name>
        <dbReference type="ChEBI" id="CHEBI:58210"/>
    </cofactor>
    <text evidence="1">Binds 1 FMN per subunit.</text>
</comment>
<comment type="pathway">
    <text>Pyrimidine metabolism; UMP biosynthesis via de novo pathway.</text>
</comment>
<comment type="subunit">
    <text evidence="1">Homodimer.</text>
</comment>
<comment type="interaction">
    <interactant intactId="EBI-2207999">
        <id>Q9X9S0</id>
    </interactant>
    <interactant intactId="EBI-2207023">
        <id>Q97SE7</id>
        <label>gatB</label>
    </interactant>
    <organismsDiffer>false</organismsDiffer>
    <experiments>2</experiments>
</comment>
<comment type="interaction">
    <interactant intactId="EBI-2207999">
        <id>Q9X9S0</id>
    </interactant>
    <interactant intactId="EBI-2207248">
        <id>P65946</id>
        <label>pyrR</label>
    </interactant>
    <organismsDiffer>false</organismsDiffer>
    <experiments>2</experiments>
</comment>
<comment type="subcellular location">
    <subcellularLocation>
        <location evidence="1">Cytoplasm</location>
    </subcellularLocation>
</comment>
<comment type="similarity">
    <text evidence="2">Belongs to the dihydroorotate dehydrogenase family. Type 1 subfamily.</text>
</comment>
<evidence type="ECO:0000250" key="1"/>
<evidence type="ECO:0000305" key="2"/>
<organism>
    <name type="scientific">Streptococcus pneumoniae serotype 4 (strain ATCC BAA-334 / TIGR4)</name>
    <dbReference type="NCBI Taxonomy" id="170187"/>
    <lineage>
        <taxon>Bacteria</taxon>
        <taxon>Bacillati</taxon>
        <taxon>Bacillota</taxon>
        <taxon>Bacilli</taxon>
        <taxon>Lactobacillales</taxon>
        <taxon>Streptococcaceae</taxon>
        <taxon>Streptococcus</taxon>
    </lineage>
</organism>
<name>PYRDA_STRPN</name>
<sequence>MVSTKTQIAGFEFDNCLMNAAGVACMTIEELEEVKNSAAGTFVTKTATLDFRQGNPEPRYQDVPLGSINSMGLPNNGLDYYLDYLLDLQEKESNRTFFLSLVGMSPEETHTILKKVQESDFRGLTELNLSCPNVPGKPQIAYDFETTDRILAEVFAYFTKPLGIKLPPYFDIVHFDQAAAIFNKYPLKFVNCVNSIGNGLYIEDESVVIRPKNGFGGIGGEYIKPTALANVHAFYQRLNPQIQIIGTGGVLTGRDAFEHILCGASMVQVGTTLHKEGVSAFDRITNELKAIMVEKGYESLEDFRGKLRYID</sequence>
<dbReference type="EC" id="1.3.98.1"/>
<dbReference type="EMBL" id="AJ131985">
    <property type="protein sequence ID" value="CAB51330.1"/>
    <property type="molecule type" value="Genomic_DNA"/>
</dbReference>
<dbReference type="EMBL" id="AE005672">
    <property type="protein sequence ID" value="AAK74902.1"/>
    <property type="molecule type" value="Genomic_DNA"/>
</dbReference>
<dbReference type="PIR" id="E95088">
    <property type="entry name" value="E95088"/>
</dbReference>
<dbReference type="RefSeq" id="WP_000255160.1">
    <property type="nucleotide sequence ID" value="NZ_CP155539.1"/>
</dbReference>
<dbReference type="SMR" id="Q9X9S0"/>
<dbReference type="IntAct" id="Q9X9S0">
    <property type="interactions" value="2"/>
</dbReference>
<dbReference type="PaxDb" id="170187-SP_0764"/>
<dbReference type="EnsemblBacteria" id="AAK74902">
    <property type="protein sequence ID" value="AAK74902"/>
    <property type="gene ID" value="SP_0764"/>
</dbReference>
<dbReference type="KEGG" id="spn:SP_0764"/>
<dbReference type="eggNOG" id="COG0167">
    <property type="taxonomic scope" value="Bacteria"/>
</dbReference>
<dbReference type="PhylomeDB" id="Q9X9S0"/>
<dbReference type="BioCyc" id="SPNE170187:G1FZB-780-MONOMER"/>
<dbReference type="UniPathway" id="UPA00070"/>
<dbReference type="Proteomes" id="UP000000585">
    <property type="component" value="Chromosome"/>
</dbReference>
<dbReference type="GO" id="GO:0005737">
    <property type="term" value="C:cytoplasm"/>
    <property type="evidence" value="ECO:0007669"/>
    <property type="project" value="UniProtKB-SubCell"/>
</dbReference>
<dbReference type="GO" id="GO:1990663">
    <property type="term" value="F:dihydroorotate dehydrogenase (fumarate) activity"/>
    <property type="evidence" value="ECO:0007669"/>
    <property type="project" value="UniProtKB-EC"/>
</dbReference>
<dbReference type="GO" id="GO:0006207">
    <property type="term" value="P:'de novo' pyrimidine nucleobase biosynthetic process"/>
    <property type="evidence" value="ECO:0007669"/>
    <property type="project" value="InterPro"/>
</dbReference>
<dbReference type="GO" id="GO:0044205">
    <property type="term" value="P:'de novo' UMP biosynthetic process"/>
    <property type="evidence" value="ECO:0007669"/>
    <property type="project" value="UniProtKB-UniRule"/>
</dbReference>
<dbReference type="CDD" id="cd04741">
    <property type="entry name" value="DHOD_1A_like"/>
    <property type="match status" value="1"/>
</dbReference>
<dbReference type="FunFam" id="3.20.20.70:FF:000027">
    <property type="entry name" value="Dihydropyrimidine dehydrogenase [NADP(+)]"/>
    <property type="match status" value="1"/>
</dbReference>
<dbReference type="Gene3D" id="3.20.20.70">
    <property type="entry name" value="Aldolase class I"/>
    <property type="match status" value="1"/>
</dbReference>
<dbReference type="HAMAP" id="MF_00224">
    <property type="entry name" value="DHO_dh_type1"/>
    <property type="match status" value="1"/>
</dbReference>
<dbReference type="InterPro" id="IPR013785">
    <property type="entry name" value="Aldolase_TIM"/>
</dbReference>
<dbReference type="InterPro" id="IPR050074">
    <property type="entry name" value="DHO_dehydrogenase"/>
</dbReference>
<dbReference type="InterPro" id="IPR033886">
    <property type="entry name" value="DHOD_1A"/>
</dbReference>
<dbReference type="InterPro" id="IPR024920">
    <property type="entry name" value="Dihydroorotate_DH_1"/>
</dbReference>
<dbReference type="InterPro" id="IPR012135">
    <property type="entry name" value="Dihydroorotate_DH_1_2"/>
</dbReference>
<dbReference type="InterPro" id="IPR005720">
    <property type="entry name" value="Dihydroorotate_DH_cat"/>
</dbReference>
<dbReference type="InterPro" id="IPR001295">
    <property type="entry name" value="Dihydroorotate_DH_CS"/>
</dbReference>
<dbReference type="NCBIfam" id="NF002702">
    <property type="entry name" value="PRK02506.1"/>
    <property type="match status" value="1"/>
</dbReference>
<dbReference type="PANTHER" id="PTHR48109:SF1">
    <property type="entry name" value="DIHYDROOROTATE DEHYDROGENASE (FUMARATE)"/>
    <property type="match status" value="1"/>
</dbReference>
<dbReference type="PANTHER" id="PTHR48109">
    <property type="entry name" value="DIHYDROOROTATE DEHYDROGENASE (QUINONE), MITOCHONDRIAL-RELATED"/>
    <property type="match status" value="1"/>
</dbReference>
<dbReference type="Pfam" id="PF01180">
    <property type="entry name" value="DHO_dh"/>
    <property type="match status" value="1"/>
</dbReference>
<dbReference type="PIRSF" id="PIRSF000164">
    <property type="entry name" value="DHO_oxidase"/>
    <property type="match status" value="1"/>
</dbReference>
<dbReference type="SUPFAM" id="SSF51395">
    <property type="entry name" value="FMN-linked oxidoreductases"/>
    <property type="match status" value="1"/>
</dbReference>
<dbReference type="PROSITE" id="PS00911">
    <property type="entry name" value="DHODEHASE_1"/>
    <property type="match status" value="1"/>
</dbReference>
<dbReference type="PROSITE" id="PS00912">
    <property type="entry name" value="DHODEHASE_2"/>
    <property type="match status" value="1"/>
</dbReference>
<reference key="1">
    <citation type="journal article" date="1999" name="J. Exp. Med.">
        <title>A single gene (tts) located outside the cap locus directs the formation of Streptococcus pneumoniae type 37 capsular polysaccharide. Type 37 pneumococci are natural, genetically binary strains.</title>
        <authorList>
            <person name="Llull D."/>
            <person name="Munoz R."/>
            <person name="Lopez R."/>
            <person name="Garcia E."/>
        </authorList>
    </citation>
    <scope>NUCLEOTIDE SEQUENCE [GENOMIC DNA]</scope>
    <source>
        <strain>1235/89</strain>
    </source>
</reference>
<reference key="2">
    <citation type="journal article" date="2001" name="Science">
        <title>Complete genome sequence of a virulent isolate of Streptococcus pneumoniae.</title>
        <authorList>
            <person name="Tettelin H."/>
            <person name="Nelson K.E."/>
            <person name="Paulsen I.T."/>
            <person name="Eisen J.A."/>
            <person name="Read T.D."/>
            <person name="Peterson S.N."/>
            <person name="Heidelberg J.F."/>
            <person name="DeBoy R.T."/>
            <person name="Haft D.H."/>
            <person name="Dodson R.J."/>
            <person name="Durkin A.S."/>
            <person name="Gwinn M.L."/>
            <person name="Kolonay J.F."/>
            <person name="Nelson W.C."/>
            <person name="Peterson J.D."/>
            <person name="Umayam L.A."/>
            <person name="White O."/>
            <person name="Salzberg S.L."/>
            <person name="Lewis M.R."/>
            <person name="Radune D."/>
            <person name="Holtzapple E.K."/>
            <person name="Khouri H.M."/>
            <person name="Wolf A.M."/>
            <person name="Utterback T.R."/>
            <person name="Hansen C.L."/>
            <person name="McDonald L.A."/>
            <person name="Feldblyum T.V."/>
            <person name="Angiuoli S.V."/>
            <person name="Dickinson T."/>
            <person name="Hickey E.K."/>
            <person name="Holt I.E."/>
            <person name="Loftus B.J."/>
            <person name="Yang F."/>
            <person name="Smith H.O."/>
            <person name="Venter J.C."/>
            <person name="Dougherty B.A."/>
            <person name="Morrison D.A."/>
            <person name="Hollingshead S.K."/>
            <person name="Fraser C.M."/>
        </authorList>
    </citation>
    <scope>NUCLEOTIDE SEQUENCE [LARGE SCALE GENOMIC DNA]</scope>
    <source>
        <strain>ATCC BAA-334 / TIGR4</strain>
    </source>
</reference>
<keyword id="KW-0963">Cytoplasm</keyword>
<keyword id="KW-0285">Flavoprotein</keyword>
<keyword id="KW-0288">FMN</keyword>
<keyword id="KW-0560">Oxidoreductase</keyword>
<keyword id="KW-0665">Pyrimidine biosynthesis</keyword>
<keyword id="KW-1185">Reference proteome</keyword>
<proteinExistence type="evidence at protein level"/>
<protein>
    <recommendedName>
        <fullName>Probable dihydroorotate dehydrogenase A (fumarate)</fullName>
        <shortName>DHOD A</shortName>
        <shortName>DHODase A</shortName>
        <shortName>DHOdehase A</shortName>
        <ecNumber>1.3.98.1</ecNumber>
    </recommendedName>
</protein>
<feature type="chain" id="PRO_0000148402" description="Probable dihydroorotate dehydrogenase A (fumarate)">
    <location>
        <begin position="1"/>
        <end position="311"/>
    </location>
</feature>
<feature type="active site" description="Nucleophile">
    <location>
        <position position="131"/>
    </location>
</feature>
<feature type="binding site" evidence="1">
    <location>
        <begin position="45"/>
        <end position="46"/>
    </location>
    <ligand>
        <name>FMN</name>
        <dbReference type="ChEBI" id="CHEBI:58210"/>
    </ligand>
</feature>
<feature type="binding site" evidence="1">
    <location>
        <position position="45"/>
    </location>
    <ligand>
        <name>substrate</name>
    </ligand>
</feature>
<feature type="binding site" evidence="1">
    <location>
        <begin position="69"/>
        <end position="73"/>
    </location>
    <ligand>
        <name>substrate</name>
    </ligand>
</feature>
<feature type="binding site" evidence="1">
    <location>
        <position position="128"/>
    </location>
    <ligand>
        <name>FMN</name>
        <dbReference type="ChEBI" id="CHEBI:58210"/>
    </ligand>
</feature>
<feature type="binding site" evidence="1">
    <location>
        <position position="128"/>
    </location>
    <ligand>
        <name>substrate</name>
    </ligand>
</feature>
<feature type="binding site" evidence="1">
    <location>
        <position position="165"/>
    </location>
    <ligand>
        <name>FMN</name>
        <dbReference type="ChEBI" id="CHEBI:58210"/>
    </ligand>
</feature>
<feature type="binding site" evidence="1">
    <location>
        <position position="193"/>
    </location>
    <ligand>
        <name>FMN</name>
        <dbReference type="ChEBI" id="CHEBI:58210"/>
    </ligand>
</feature>
<feature type="binding site" evidence="1">
    <location>
        <begin position="194"/>
        <end position="195"/>
    </location>
    <ligand>
        <name>substrate</name>
    </ligand>
</feature>
<feature type="binding site" evidence="1">
    <location>
        <position position="220"/>
    </location>
    <ligand>
        <name>FMN</name>
        <dbReference type="ChEBI" id="CHEBI:58210"/>
    </ligand>
</feature>
<feature type="binding site" evidence="1">
    <location>
        <begin position="248"/>
        <end position="249"/>
    </location>
    <ligand>
        <name>FMN</name>
        <dbReference type="ChEBI" id="CHEBI:58210"/>
    </ligand>
</feature>
<feature type="binding site" evidence="1">
    <location>
        <begin position="270"/>
        <end position="271"/>
    </location>
    <ligand>
        <name>FMN</name>
        <dbReference type="ChEBI" id="CHEBI:58210"/>
    </ligand>
</feature>
<feature type="sequence conflict" description="In Ref. 1; CAB51330." evidence="2" ref="1">
    <original>H</original>
    <variation>Y</variation>
    <location>
        <position position="174"/>
    </location>
</feature>
<accession>Q9X9S0</accession>
<gene>
    <name type="primary">pyrDA</name>
    <name type="ordered locus">SP_0764</name>
</gene>